<proteinExistence type="evidence at protein level"/>
<name>SIR4_HUMAN</name>
<keyword id="KW-0903">Direct protein sequencing</keyword>
<keyword id="KW-0227">DNA damage</keyword>
<keyword id="KW-0328">Glycosyltransferase</keyword>
<keyword id="KW-0479">Metal-binding</keyword>
<keyword id="KW-0496">Mitochondrion</keyword>
<keyword id="KW-0520">NAD</keyword>
<keyword id="KW-0548">Nucleotidyltransferase</keyword>
<keyword id="KW-1267">Proteomics identification</keyword>
<keyword id="KW-1185">Reference proteome</keyword>
<keyword id="KW-0808">Transferase</keyword>
<keyword id="KW-0809">Transit peptide</keyword>
<keyword id="KW-0043">Tumor suppressor</keyword>
<keyword id="KW-0862">Zinc</keyword>
<dbReference type="EC" id="2.3.1.-" evidence="1 11 12"/>
<dbReference type="EC" id="2.4.2.-" evidence="1"/>
<dbReference type="EC" id="2.3.1.286" evidence="1 2"/>
<dbReference type="EMBL" id="AF083109">
    <property type="protein sequence ID" value="AAD40852.1"/>
    <property type="molecule type" value="mRNA"/>
</dbReference>
<dbReference type="EMBL" id="AC003982">
    <property type="protein sequence ID" value="AAB95634.1"/>
    <property type="status" value="ALT_SEQ"/>
    <property type="molecule type" value="Genomic_DNA"/>
</dbReference>
<dbReference type="EMBL" id="BC109319">
    <property type="protein sequence ID" value="AAI09320.1"/>
    <property type="molecule type" value="mRNA"/>
</dbReference>
<dbReference type="EMBL" id="BC109320">
    <property type="protein sequence ID" value="AAI09321.1"/>
    <property type="molecule type" value="mRNA"/>
</dbReference>
<dbReference type="CCDS" id="CCDS9194.1"/>
<dbReference type="RefSeq" id="NP_001372662.1">
    <property type="nucleotide sequence ID" value="NM_001385733.2"/>
</dbReference>
<dbReference type="RefSeq" id="NP_036372.1">
    <property type="nucleotide sequence ID" value="NM_012240.3"/>
</dbReference>
<dbReference type="RefSeq" id="XP_006719371.1">
    <property type="nucleotide sequence ID" value="XM_006719308.2"/>
</dbReference>
<dbReference type="RefSeq" id="XP_006719372.1">
    <property type="nucleotide sequence ID" value="XM_006719309.5"/>
</dbReference>
<dbReference type="RefSeq" id="XP_054227554.1">
    <property type="nucleotide sequence ID" value="XM_054371579.1"/>
</dbReference>
<dbReference type="SMR" id="Q9Y6E7"/>
<dbReference type="BioGRID" id="116981">
    <property type="interactions" value="26"/>
</dbReference>
<dbReference type="FunCoup" id="Q9Y6E7">
    <property type="interactions" value="1128"/>
</dbReference>
<dbReference type="IntAct" id="Q9Y6E7">
    <property type="interactions" value="111"/>
</dbReference>
<dbReference type="STRING" id="9606.ENSP00000202967"/>
<dbReference type="ChEMBL" id="CHEMBL2163185"/>
<dbReference type="GlyGen" id="Q9Y6E7">
    <property type="glycosylation" value="1 site"/>
</dbReference>
<dbReference type="iPTMnet" id="Q9Y6E7"/>
<dbReference type="PhosphoSitePlus" id="Q9Y6E7"/>
<dbReference type="BioMuta" id="SIRT4"/>
<dbReference type="DMDM" id="38258657"/>
<dbReference type="jPOST" id="Q9Y6E7"/>
<dbReference type="MassIVE" id="Q9Y6E7"/>
<dbReference type="PaxDb" id="9606-ENSP00000202967"/>
<dbReference type="PeptideAtlas" id="Q9Y6E7"/>
<dbReference type="ProteomicsDB" id="86660"/>
<dbReference type="Antibodypedia" id="31464">
    <property type="antibodies" value="376 antibodies from 38 providers"/>
</dbReference>
<dbReference type="DNASU" id="23409"/>
<dbReference type="Ensembl" id="ENST00000202967.4">
    <property type="protein sequence ID" value="ENSP00000202967.4"/>
    <property type="gene ID" value="ENSG00000089163.4"/>
</dbReference>
<dbReference type="GeneID" id="23409"/>
<dbReference type="KEGG" id="hsa:23409"/>
<dbReference type="MANE-Select" id="ENST00000202967.4">
    <property type="protein sequence ID" value="ENSP00000202967.4"/>
    <property type="RefSeq nucleotide sequence ID" value="NM_012240.3"/>
    <property type="RefSeq protein sequence ID" value="NP_036372.1"/>
</dbReference>
<dbReference type="UCSC" id="uc001tyc.4">
    <property type="organism name" value="human"/>
</dbReference>
<dbReference type="AGR" id="HGNC:14932"/>
<dbReference type="CTD" id="23409"/>
<dbReference type="DisGeNET" id="23409"/>
<dbReference type="GeneCards" id="SIRT4"/>
<dbReference type="HGNC" id="HGNC:14932">
    <property type="gene designation" value="SIRT4"/>
</dbReference>
<dbReference type="HPA" id="ENSG00000089163">
    <property type="expression patterns" value="Low tissue specificity"/>
</dbReference>
<dbReference type="MalaCards" id="SIRT4"/>
<dbReference type="MIM" id="604482">
    <property type="type" value="gene"/>
</dbReference>
<dbReference type="neXtProt" id="NX_Q9Y6E7"/>
<dbReference type="OpenTargets" id="ENSG00000089163"/>
<dbReference type="PharmGKB" id="PA37937"/>
<dbReference type="VEuPathDB" id="HostDB:ENSG00000089163"/>
<dbReference type="eggNOG" id="KOG2683">
    <property type="taxonomic scope" value="Eukaryota"/>
</dbReference>
<dbReference type="GeneTree" id="ENSGT00940000158891"/>
<dbReference type="HOGENOM" id="CLU_023643_3_2_1"/>
<dbReference type="InParanoid" id="Q9Y6E7"/>
<dbReference type="OMA" id="RRHYWAR"/>
<dbReference type="OrthoDB" id="424302at2759"/>
<dbReference type="PAN-GO" id="Q9Y6E7">
    <property type="GO annotations" value="3 GO annotations based on evolutionary models"/>
</dbReference>
<dbReference type="PhylomeDB" id="Q9Y6E7"/>
<dbReference type="TreeFam" id="TF106182"/>
<dbReference type="BioCyc" id="MetaCyc:ENSG00000089163-MONOMER"/>
<dbReference type="PathwayCommons" id="Q9Y6E7"/>
<dbReference type="Reactome" id="R-HSA-204174">
    <property type="pathway name" value="Regulation of pyruvate dehydrogenase (PDH) complex"/>
</dbReference>
<dbReference type="Reactome" id="R-HSA-2151201">
    <property type="pathway name" value="Transcriptional activation of mitochondrial biogenesis"/>
</dbReference>
<dbReference type="SignaLink" id="Q9Y6E7"/>
<dbReference type="SIGNOR" id="Q9Y6E7"/>
<dbReference type="BioGRID-ORCS" id="23409">
    <property type="hits" value="40 hits in 1169 CRISPR screens"/>
</dbReference>
<dbReference type="ChiTaRS" id="SIRT4">
    <property type="organism name" value="human"/>
</dbReference>
<dbReference type="GeneWiki" id="SIRT4"/>
<dbReference type="GenomeRNAi" id="23409"/>
<dbReference type="Pharos" id="Q9Y6E7">
    <property type="development level" value="Tbio"/>
</dbReference>
<dbReference type="PRO" id="PR:Q9Y6E7"/>
<dbReference type="Proteomes" id="UP000005640">
    <property type="component" value="Chromosome 12"/>
</dbReference>
<dbReference type="RNAct" id="Q9Y6E7">
    <property type="molecule type" value="protein"/>
</dbReference>
<dbReference type="Bgee" id="ENSG00000089163">
    <property type="expression patterns" value="Expressed in male germ line stem cell (sensu Vertebrata) in testis and 118 other cell types or tissues"/>
</dbReference>
<dbReference type="ExpressionAtlas" id="Q9Y6E7">
    <property type="expression patterns" value="baseline and differential"/>
</dbReference>
<dbReference type="GO" id="GO:0005743">
    <property type="term" value="C:mitochondrial inner membrane"/>
    <property type="evidence" value="ECO:0007669"/>
    <property type="project" value="Ensembl"/>
</dbReference>
<dbReference type="GO" id="GO:0005759">
    <property type="term" value="C:mitochondrial matrix"/>
    <property type="evidence" value="ECO:0000314"/>
    <property type="project" value="UniProtKB"/>
</dbReference>
<dbReference type="GO" id="GO:0005739">
    <property type="term" value="C:mitochondrion"/>
    <property type="evidence" value="ECO:0000314"/>
    <property type="project" value="UniProtKB"/>
</dbReference>
<dbReference type="GO" id="GO:0017136">
    <property type="term" value="F:histone deacetylase activity, NAD-dependent"/>
    <property type="evidence" value="ECO:0000318"/>
    <property type="project" value="GO_Central"/>
</dbReference>
<dbReference type="GO" id="GO:0061690">
    <property type="term" value="F:lipoamidase activity"/>
    <property type="evidence" value="ECO:0007669"/>
    <property type="project" value="Ensembl"/>
</dbReference>
<dbReference type="GO" id="GO:0070403">
    <property type="term" value="F:NAD+ binding"/>
    <property type="evidence" value="ECO:0000318"/>
    <property type="project" value="GO_Central"/>
</dbReference>
<dbReference type="GO" id="GO:0003950">
    <property type="term" value="F:NAD+ poly-ADP-ribosyltransferase activity"/>
    <property type="evidence" value="ECO:0000314"/>
    <property type="project" value="UniProtKB"/>
</dbReference>
<dbReference type="GO" id="GO:1990404">
    <property type="term" value="F:NAD+-protein mono-ADP-ribosyltransferase activity"/>
    <property type="evidence" value="ECO:0000304"/>
    <property type="project" value="BHF-UCL"/>
</dbReference>
<dbReference type="GO" id="GO:0140803">
    <property type="term" value="F:NAD+-protein-cysteine ADP-ribosyltransferase activity"/>
    <property type="evidence" value="ECO:0007669"/>
    <property type="project" value="RHEA"/>
</dbReference>
<dbReference type="GO" id="GO:0106420">
    <property type="term" value="F:NAD-dependent protein biotinidase activity"/>
    <property type="evidence" value="ECO:0000314"/>
    <property type="project" value="UniProtKB"/>
</dbReference>
<dbReference type="GO" id="GO:0106419">
    <property type="term" value="F:NAD-dependent protein lipoamidase activity"/>
    <property type="evidence" value="ECO:0000314"/>
    <property type="project" value="UniProtKB"/>
</dbReference>
<dbReference type="GO" id="GO:0016779">
    <property type="term" value="F:nucleotidyltransferase activity"/>
    <property type="evidence" value="ECO:0007669"/>
    <property type="project" value="UniProtKB-KW"/>
</dbReference>
<dbReference type="GO" id="GO:0008270">
    <property type="term" value="F:zinc ion binding"/>
    <property type="evidence" value="ECO:0007669"/>
    <property type="project" value="UniProtKB-UniRule"/>
</dbReference>
<dbReference type="GO" id="GO:0071456">
    <property type="term" value="P:cellular response to hypoxia"/>
    <property type="evidence" value="ECO:0007669"/>
    <property type="project" value="Ensembl"/>
</dbReference>
<dbReference type="GO" id="GO:0006974">
    <property type="term" value="P:DNA damage response"/>
    <property type="evidence" value="ECO:0000250"/>
    <property type="project" value="UniProtKB"/>
</dbReference>
<dbReference type="GO" id="GO:0006541">
    <property type="term" value="P:glutamine metabolic process"/>
    <property type="evidence" value="ECO:0000250"/>
    <property type="project" value="UniProtKB"/>
</dbReference>
<dbReference type="GO" id="GO:0007005">
    <property type="term" value="P:mitochondrion organization"/>
    <property type="evidence" value="ECO:0000304"/>
    <property type="project" value="Reactome"/>
</dbReference>
<dbReference type="GO" id="GO:0010667">
    <property type="term" value="P:negative regulation of cardiac muscle cell apoptotic process"/>
    <property type="evidence" value="ECO:0007669"/>
    <property type="project" value="Ensembl"/>
</dbReference>
<dbReference type="GO" id="GO:0046322">
    <property type="term" value="P:negative regulation of fatty acid oxidation"/>
    <property type="evidence" value="ECO:0000315"/>
    <property type="project" value="UniProtKB"/>
</dbReference>
<dbReference type="GO" id="GO:0046676">
    <property type="term" value="P:negative regulation of insulin secretion"/>
    <property type="evidence" value="ECO:0000315"/>
    <property type="project" value="UniProtKB"/>
</dbReference>
<dbReference type="GO" id="GO:1903217">
    <property type="term" value="P:negative regulation of protein processing involved in protein targeting to mitochondrion"/>
    <property type="evidence" value="ECO:0007669"/>
    <property type="project" value="Ensembl"/>
</dbReference>
<dbReference type="GO" id="GO:0034983">
    <property type="term" value="P:peptidyl-lysine deacetylation"/>
    <property type="evidence" value="ECO:0000250"/>
    <property type="project" value="UniProtKB"/>
</dbReference>
<dbReference type="GO" id="GO:0046889">
    <property type="term" value="P:positive regulation of lipid biosynthetic process"/>
    <property type="evidence" value="ECO:0000250"/>
    <property type="project" value="UniProtKB"/>
</dbReference>
<dbReference type="GO" id="GO:0000820">
    <property type="term" value="P:regulation of glutamine family amino acid metabolic process"/>
    <property type="evidence" value="ECO:0007669"/>
    <property type="project" value="Ensembl"/>
</dbReference>
<dbReference type="GO" id="GO:1904182">
    <property type="term" value="P:regulation of pyruvate dehydrogenase activity"/>
    <property type="evidence" value="ECO:0000314"/>
    <property type="project" value="UniProtKB"/>
</dbReference>
<dbReference type="GO" id="GO:0072350">
    <property type="term" value="P:tricarboxylic acid metabolic process"/>
    <property type="evidence" value="ECO:0000250"/>
    <property type="project" value="UniProtKB"/>
</dbReference>
<dbReference type="CDD" id="cd01409">
    <property type="entry name" value="SIRT4"/>
    <property type="match status" value="1"/>
</dbReference>
<dbReference type="Gene3D" id="3.30.1600.10">
    <property type="entry name" value="SIR2/SIRT2 'Small Domain"/>
    <property type="match status" value="1"/>
</dbReference>
<dbReference type="Gene3D" id="3.40.50.1220">
    <property type="entry name" value="TPP-binding domain"/>
    <property type="match status" value="1"/>
</dbReference>
<dbReference type="HAMAP" id="MF_01967">
    <property type="entry name" value="Sirtuin_ClassII"/>
    <property type="match status" value="1"/>
</dbReference>
<dbReference type="InterPro" id="IPR029035">
    <property type="entry name" value="DHS-like_NAD/FAD-binding_dom"/>
</dbReference>
<dbReference type="InterPro" id="IPR050134">
    <property type="entry name" value="NAD-dep_sirtuin_deacylases"/>
</dbReference>
<dbReference type="InterPro" id="IPR003000">
    <property type="entry name" value="Sirtuin"/>
</dbReference>
<dbReference type="InterPro" id="IPR026591">
    <property type="entry name" value="Sirtuin_cat_small_dom_sf"/>
</dbReference>
<dbReference type="InterPro" id="IPR026587">
    <property type="entry name" value="Sirtuin_class_II"/>
</dbReference>
<dbReference type="InterPro" id="IPR026590">
    <property type="entry name" value="Ssirtuin_cat_dom"/>
</dbReference>
<dbReference type="NCBIfam" id="NF003738">
    <property type="entry name" value="PRK05333.1"/>
    <property type="match status" value="1"/>
</dbReference>
<dbReference type="PANTHER" id="PTHR11085">
    <property type="entry name" value="NAD-DEPENDENT PROTEIN DEACYLASE SIRTUIN-5, MITOCHONDRIAL-RELATED"/>
    <property type="match status" value="1"/>
</dbReference>
<dbReference type="PANTHER" id="PTHR11085:SF10">
    <property type="entry name" value="NAD-DEPENDENT PROTEIN DEACYLASE SIRTUIN-5, MITOCHONDRIAL-RELATED"/>
    <property type="match status" value="1"/>
</dbReference>
<dbReference type="Pfam" id="PF02146">
    <property type="entry name" value="SIR2"/>
    <property type="match status" value="1"/>
</dbReference>
<dbReference type="SUPFAM" id="SSF52467">
    <property type="entry name" value="DHS-like NAD/FAD-binding domain"/>
    <property type="match status" value="1"/>
</dbReference>
<dbReference type="PROSITE" id="PS50305">
    <property type="entry name" value="SIRTUIN"/>
    <property type="match status" value="1"/>
</dbReference>
<feature type="transit peptide" description="Mitochondrion" evidence="1 5 6">
    <location>
        <begin position="1"/>
        <end position="28"/>
    </location>
</feature>
<feature type="chain" id="PRO_0000110264" description="NAD-dependent protein lipoamidase sirtuin-4, mitochondrial">
    <location>
        <begin position="29"/>
        <end position="314"/>
    </location>
</feature>
<feature type="domain" description="Deacetylase sirtuin-type" evidence="2">
    <location>
        <begin position="37"/>
        <end position="314"/>
    </location>
</feature>
<feature type="active site" description="Proton acceptor" evidence="2">
    <location>
        <position position="161"/>
    </location>
</feature>
<feature type="binding site" evidence="1">
    <location>
        <begin position="62"/>
        <end position="82"/>
    </location>
    <ligand>
        <name>NAD(+)</name>
        <dbReference type="ChEBI" id="CHEBI:57540"/>
    </ligand>
</feature>
<feature type="binding site" evidence="1">
    <location>
        <begin position="143"/>
        <end position="146"/>
    </location>
    <ligand>
        <name>NAD(+)</name>
        <dbReference type="ChEBI" id="CHEBI:57540"/>
    </ligand>
</feature>
<feature type="binding site" evidence="1">
    <location>
        <position position="169"/>
    </location>
    <ligand>
        <name>Zn(2+)</name>
        <dbReference type="ChEBI" id="CHEBI:29105"/>
    </ligand>
</feature>
<feature type="binding site" evidence="1">
    <location>
        <position position="172"/>
    </location>
    <ligand>
        <name>Zn(2+)</name>
        <dbReference type="ChEBI" id="CHEBI:29105"/>
    </ligand>
</feature>
<feature type="binding site" evidence="1">
    <location>
        <position position="220"/>
    </location>
    <ligand>
        <name>Zn(2+)</name>
        <dbReference type="ChEBI" id="CHEBI:29105"/>
    </ligand>
</feature>
<feature type="binding site" evidence="1">
    <location>
        <position position="223"/>
    </location>
    <ligand>
        <name>Zn(2+)</name>
        <dbReference type="ChEBI" id="CHEBI:29105"/>
    </ligand>
</feature>
<feature type="binding site" evidence="1">
    <location>
        <begin position="260"/>
        <end position="262"/>
    </location>
    <ligand>
        <name>NAD(+)</name>
        <dbReference type="ChEBI" id="CHEBI:57540"/>
    </ligand>
</feature>
<feature type="binding site" evidence="1">
    <location>
        <begin position="286"/>
        <end position="288"/>
    </location>
    <ligand>
        <name>NAD(+)</name>
        <dbReference type="ChEBI" id="CHEBI:57540"/>
    </ligand>
</feature>
<feature type="binding site" evidence="1">
    <location>
        <position position="304"/>
    </location>
    <ligand>
        <name>NAD(+)</name>
        <dbReference type="ChEBI" id="CHEBI:57540"/>
    </ligand>
</feature>
<feature type="mutagenesis site" description="Abolishes inhibition of PDH complex activity." evidence="12">
    <original>H</original>
    <variation>Y</variation>
    <location>
        <position position="161"/>
    </location>
</feature>
<comment type="function">
    <text evidence="1 5 6 7 8 9 10 11 12">Acts as a NAD-dependent protein lipoamidase, biotinylase, deacetylase and ADP-ribosyl transferase (PubMed:16959573, PubMed:17715127, PubMed:24052263, PubMed:25525879). Catalyzes more efficiently removal of lipoyl- and biotinyl- than acetyl-lysine modifications (PubMed:24052263, PubMed:25525879). Inhibits the pyruvate dehydrogenase complex (PDH) activity via the enzymatic hydrolysis of the lipoamide cofactor from the E2 component, DLAT, in a phosphorylation-independent manner (PubMed:25525879). Catalyzes the transfer of ADP-ribosyl groups onto target proteins, including mitochondrial GLUD1, inhibiting GLUD1 enzyme activity (PubMed:16959573, PubMed:17715127). Acts as a negative regulator of mitochondrial glutamine metabolism by mediating mono ADP-ribosylation of GLUD1: expressed in response to DNA damage and negatively regulates anaplerosis by inhibiting GLUD1, leading to block metabolism of glutamine into tricarboxylic acid cycle and promoting cell cycle arrest (PubMed:16959573, PubMed:17715127). In response to mTORC1 signal, SIRT4 expression is repressed, promoting anaplerosis and cell proliferation (PubMed:23663782). Acts as a tumor suppressor (PubMed:23562301, PubMed:23663782). Also acts as a NAD-dependent protein deacetylase: mediates deacetylation of 'Lys-471' of MLYCD, inhibiting its activity, thereby acting as a regulator of lipid homeostasis (By similarity). Does not seem to deacetylate PC (PubMed:23438705). Controls fatty acid oxidation by inhibiting PPARA transcriptional activation (PubMed:24043310). Impairs SIRT1-PPARA interaction probably through the regulation of NAD(+) levels (PubMed:24043310). Down-regulates insulin secretion (PubMed:17715127).</text>
</comment>
<comment type="catalytic activity">
    <reaction evidence="1 11 12">
        <text>N(6)-[(R)-lipoyl]-L-lysyl-[protein] + NAD(+) + H2O = 2''-O-lipoyl-ADP-D-ribose + nicotinamide + L-lysyl-[protein]</text>
        <dbReference type="Rhea" id="RHEA:63640"/>
        <dbReference type="Rhea" id="RHEA-COMP:9752"/>
        <dbReference type="Rhea" id="RHEA-COMP:10474"/>
        <dbReference type="ChEBI" id="CHEBI:15377"/>
        <dbReference type="ChEBI" id="CHEBI:17154"/>
        <dbReference type="ChEBI" id="CHEBI:29969"/>
        <dbReference type="ChEBI" id="CHEBI:57540"/>
        <dbReference type="ChEBI" id="CHEBI:83099"/>
        <dbReference type="ChEBI" id="CHEBI:189572"/>
    </reaction>
    <physiologicalReaction direction="left-to-right" evidence="1 11 12">
        <dbReference type="Rhea" id="RHEA:63641"/>
    </physiologicalReaction>
</comment>
<comment type="catalytic activity">
    <reaction evidence="1 12">
        <text>N(6)-biotinyl-L-lysyl-[protein] + NAD(+) + H2O = 2''-O-biotinyl-ADP-D-ribose + nicotinamide + L-lysyl-[protein]</text>
        <dbReference type="Rhea" id="RHEA:70479"/>
        <dbReference type="Rhea" id="RHEA-COMP:9752"/>
        <dbReference type="Rhea" id="RHEA-COMP:10505"/>
        <dbReference type="ChEBI" id="CHEBI:15377"/>
        <dbReference type="ChEBI" id="CHEBI:17154"/>
        <dbReference type="ChEBI" id="CHEBI:29969"/>
        <dbReference type="ChEBI" id="CHEBI:57540"/>
        <dbReference type="ChEBI" id="CHEBI:83144"/>
        <dbReference type="ChEBI" id="CHEBI:189573"/>
    </reaction>
    <physiologicalReaction direction="left-to-right" evidence="1 12">
        <dbReference type="Rhea" id="RHEA:70480"/>
    </physiologicalReaction>
</comment>
<comment type="catalytic activity">
    <reaction evidence="1 15">
        <text>N(6)-acetyl-L-lysyl-[protein] + NAD(+) + H2O = 2''-O-acetyl-ADP-D-ribose + nicotinamide + L-lysyl-[protein]</text>
        <dbReference type="Rhea" id="RHEA:43636"/>
        <dbReference type="Rhea" id="RHEA-COMP:9752"/>
        <dbReference type="Rhea" id="RHEA-COMP:10731"/>
        <dbReference type="ChEBI" id="CHEBI:15377"/>
        <dbReference type="ChEBI" id="CHEBI:17154"/>
        <dbReference type="ChEBI" id="CHEBI:29969"/>
        <dbReference type="ChEBI" id="CHEBI:57540"/>
        <dbReference type="ChEBI" id="CHEBI:61930"/>
        <dbReference type="ChEBI" id="CHEBI:83767"/>
        <dbReference type="EC" id="2.3.1.286"/>
    </reaction>
    <physiologicalReaction direction="left-to-right" evidence="15">
        <dbReference type="Rhea" id="RHEA:43637"/>
    </physiologicalReaction>
</comment>
<comment type="catalytic activity">
    <reaction evidence="1 6">
        <text>L-cysteinyl-[protein] + NAD(+) = S-(ADP-D-ribosyl)-L-cysteinyl-[protein] + nicotinamide + H(+)</text>
        <dbReference type="Rhea" id="RHEA:56612"/>
        <dbReference type="Rhea" id="RHEA-COMP:10131"/>
        <dbReference type="Rhea" id="RHEA-COMP:14624"/>
        <dbReference type="ChEBI" id="CHEBI:15378"/>
        <dbReference type="ChEBI" id="CHEBI:17154"/>
        <dbReference type="ChEBI" id="CHEBI:29950"/>
        <dbReference type="ChEBI" id="CHEBI:57540"/>
        <dbReference type="ChEBI" id="CHEBI:140607"/>
    </reaction>
</comment>
<comment type="cofactor">
    <cofactor evidence="1">
        <name>Zn(2+)</name>
        <dbReference type="ChEBI" id="CHEBI:29105"/>
    </cofactor>
    <text evidence="1">Binds 1 zinc ion per subunit.</text>
</comment>
<comment type="biophysicochemical properties">
    <kinetics>
        <KM evidence="12">719 uM for a peptide of H3 biotinylated at 'Lys-9'</KM>
        <KM evidence="12">814 uM for a peptide of H3 lipoylated at 'Lys-9'</KM>
        <KM evidence="12">239 uM for a peptide of DLAT lipoylated at 'Lys-259'</KM>
        <text evidence="12">kcat is 0.0019 sec(-1) for the delipoylation of H3 'Lys-9'. kcat is 0.0005 sec(-1) for the debiotinylation of H3 'Lys-9'. kcat is 0.0018 sec(-1) for the delipoylation of DLAT 'Lys-259'.</text>
    </kinetics>
</comment>
<comment type="subunit">
    <text evidence="1 5 6 7 12">Interacts with GLUD1, IDE and SLC25A5 (PubMed:16959573, PubMed:17715127). Interacts with DLAT and PDHX (PubMed:25525879). Interacts with MCCC1 (via the biotin carboxylation domain) (PubMed:23438705). Interacts with PCCA and PC (PubMed:23438705).</text>
</comment>
<comment type="interaction">
    <interactant intactId="EBI-2606540">
        <id>Q9Y6E7</id>
    </interactant>
    <interactant intactId="EBI-2959723">
        <id>P10515</id>
        <label>DLAT</label>
    </interactant>
    <organismsDiffer>false</organismsDiffer>
    <experiments>6</experiments>
</comment>
<comment type="interaction">
    <interactant intactId="EBI-2606540">
        <id>Q9Y6E7</id>
    </interactant>
    <interactant intactId="EBI-751566">
        <id>O00330</id>
        <label>PDHX</label>
    </interactant>
    <organismsDiffer>false</organismsDiffer>
    <experiments>4</experiments>
</comment>
<comment type="interaction">
    <interactant intactId="EBI-2606540">
        <id>Q9Y6E7</id>
    </interactant>
    <interactant intactId="EBI-355133">
        <id>P05141</id>
        <label>SLC25A5</label>
    </interactant>
    <organismsDiffer>false</organismsDiffer>
    <experiments>2</experiments>
</comment>
<comment type="subcellular location">
    <subcellularLocation>
        <location evidence="1 4 5 6">Mitochondrion matrix</location>
    </subcellularLocation>
</comment>
<comment type="tissue specificity">
    <text evidence="3">Detected in vascular smooth muscle and striated muscle. Detected in insulin-producing beta-cells in pancreas islets of Langerhans (at protein level). Widely expressed. Weakly expressed in leukocytes and fetal thymus.</text>
</comment>
<comment type="induction">
    <text evidence="12">Induced by glutamine (at protein level).</text>
</comment>
<comment type="miscellaneous">
    <text evidence="16 17">Expression is down-regulated in a number of cancers, while overexpression reduces cell proliferation, transformation, and tumor development (PubMed:23562301, PubMed:23663782).</text>
</comment>
<comment type="miscellaneous">
    <text evidence="1">According to some authors, ADP-ribosyltransferase activity of sirtuins may be an inefficient side reaction of the deacetylase activity and may not be physiologically relevant.</text>
</comment>
<comment type="similarity">
    <text evidence="1">Belongs to the sirtuin family. Class II subfamily.</text>
</comment>
<comment type="sequence caution" evidence="14">
    <conflict type="erroneous gene model prediction">
        <sequence resource="EMBL-CDS" id="AAB95634"/>
    </conflict>
</comment>
<gene>
    <name evidence="1 18" type="primary">SIRT4</name>
    <name type="synonym">SIR2L4</name>
</gene>
<organism>
    <name type="scientific">Homo sapiens</name>
    <name type="common">Human</name>
    <dbReference type="NCBI Taxonomy" id="9606"/>
    <lineage>
        <taxon>Eukaryota</taxon>
        <taxon>Metazoa</taxon>
        <taxon>Chordata</taxon>
        <taxon>Craniata</taxon>
        <taxon>Vertebrata</taxon>
        <taxon>Euteleostomi</taxon>
        <taxon>Mammalia</taxon>
        <taxon>Eutheria</taxon>
        <taxon>Euarchontoglires</taxon>
        <taxon>Primates</taxon>
        <taxon>Haplorrhini</taxon>
        <taxon>Catarrhini</taxon>
        <taxon>Hominidae</taxon>
        <taxon>Homo</taxon>
    </lineage>
</organism>
<evidence type="ECO:0000255" key="1">
    <source>
        <dbReference type="HAMAP-Rule" id="MF_03161"/>
    </source>
</evidence>
<evidence type="ECO:0000255" key="2">
    <source>
        <dbReference type="PROSITE-ProRule" id="PRU00236"/>
    </source>
</evidence>
<evidence type="ECO:0000269" key="3">
    <source>
    </source>
</evidence>
<evidence type="ECO:0000269" key="4">
    <source>
    </source>
</evidence>
<evidence type="ECO:0000269" key="5">
    <source>
    </source>
</evidence>
<evidence type="ECO:0000269" key="6">
    <source>
    </source>
</evidence>
<evidence type="ECO:0000269" key="7">
    <source>
    </source>
</evidence>
<evidence type="ECO:0000269" key="8">
    <source>
    </source>
</evidence>
<evidence type="ECO:0000269" key="9">
    <source>
    </source>
</evidence>
<evidence type="ECO:0000269" key="10">
    <source>
    </source>
</evidence>
<evidence type="ECO:0000269" key="11">
    <source>
    </source>
</evidence>
<evidence type="ECO:0000269" key="12">
    <source>
    </source>
</evidence>
<evidence type="ECO:0000303" key="13">
    <source>
    </source>
</evidence>
<evidence type="ECO:0000305" key="14"/>
<evidence type="ECO:0000305" key="15">
    <source>
    </source>
</evidence>
<evidence type="ECO:0000305" key="16">
    <source>
    </source>
</evidence>
<evidence type="ECO:0000305" key="17">
    <source>
    </source>
</evidence>
<evidence type="ECO:0000312" key="18">
    <source>
        <dbReference type="HGNC" id="HGNC:14932"/>
    </source>
</evidence>
<protein>
    <recommendedName>
        <fullName evidence="1 13">NAD-dependent protein lipoamidase sirtuin-4, mitochondrial</fullName>
        <ecNumber evidence="1 11 12">2.3.1.-</ecNumber>
    </recommendedName>
    <alternativeName>
        <fullName evidence="1">NAD-dependent ADP-ribosyltransferase sirtuin-4</fullName>
        <ecNumber evidence="1">2.4.2.-</ecNumber>
    </alternativeName>
    <alternativeName>
        <fullName evidence="1">NAD-dependent protein biotinylase sirtuin-4</fullName>
        <ecNumber evidence="1 12">2.3.1.-</ecNumber>
    </alternativeName>
    <alternativeName>
        <fullName evidence="1">NAD-dependent protein deacetylase sirtuin-4</fullName>
        <ecNumber evidence="1 2">2.3.1.286</ecNumber>
    </alternativeName>
    <alternativeName>
        <fullName evidence="1">Regulatory protein SIR2 homolog 4</fullName>
    </alternativeName>
    <alternativeName>
        <fullName evidence="1">SIR2-like protein 4</fullName>
    </alternativeName>
</protein>
<sequence length="314" mass="35188">MKMSFALTFRSAKGRWIANPSQPCSKASIGLFVPASPPLDPEKVKELQRFITLSKRLLVMTGAGISTESGIPDYRSEKVGLYARTDRRPIQHGDFVRSAPIRQRYWARNFVGWPQFSSHQPNPAHWALSTWEKLGKLYWLVTQNVDALHTKAGSRRLTELHGCMDRVLCLDCGEQTPRGVLQERFQVLNPTWSAEAHGLAPDGDVFLSEEQVRSFQVPTCVQCGGHLKPDVVFFGDTVNPDKVDFVHKRVKEADSLLVVGSSLQVYSGYRFILTAWEKKLPIAILNIGPTRSDDLACLKLNSRCGELLPLIDPC</sequence>
<reference key="1">
    <citation type="journal article" date="1999" name="Biochem. Biophys. Res. Commun.">
        <title>Characterization of five human cDNAs with homology to the yeast SIR2 gene: Sir2-like proteins (sirtuins) metabolize NAD and may have protein ADP-ribosyltransferase activity.</title>
        <authorList>
            <person name="Frye R.A."/>
        </authorList>
    </citation>
    <scope>NUCLEOTIDE SEQUENCE [MRNA]</scope>
    <scope>TISSUE SPECIFICITY</scope>
    <source>
        <tissue>Testis</tissue>
    </source>
</reference>
<reference key="2">
    <citation type="journal article" date="2006" name="Nature">
        <title>The finished DNA sequence of human chromosome 12.</title>
        <authorList>
            <person name="Scherer S.E."/>
            <person name="Muzny D.M."/>
            <person name="Buhay C.J."/>
            <person name="Chen R."/>
            <person name="Cree A."/>
            <person name="Ding Y."/>
            <person name="Dugan-Rocha S."/>
            <person name="Gill R."/>
            <person name="Gunaratne P."/>
            <person name="Harris R.A."/>
            <person name="Hawes A.C."/>
            <person name="Hernandez J."/>
            <person name="Hodgson A.V."/>
            <person name="Hume J."/>
            <person name="Jackson A."/>
            <person name="Khan Z.M."/>
            <person name="Kovar-Smith C."/>
            <person name="Lewis L.R."/>
            <person name="Lozado R.J."/>
            <person name="Metzker M.L."/>
            <person name="Milosavljevic A."/>
            <person name="Miner G.R."/>
            <person name="Montgomery K.T."/>
            <person name="Morgan M.B."/>
            <person name="Nazareth L.V."/>
            <person name="Scott G."/>
            <person name="Sodergren E."/>
            <person name="Song X.-Z."/>
            <person name="Steffen D."/>
            <person name="Lovering R.C."/>
            <person name="Wheeler D.A."/>
            <person name="Worley K.C."/>
            <person name="Yuan Y."/>
            <person name="Zhang Z."/>
            <person name="Adams C.Q."/>
            <person name="Ansari-Lari M.A."/>
            <person name="Ayele M."/>
            <person name="Brown M.J."/>
            <person name="Chen G."/>
            <person name="Chen Z."/>
            <person name="Clerc-Blankenburg K.P."/>
            <person name="Davis C."/>
            <person name="Delgado O."/>
            <person name="Dinh H.H."/>
            <person name="Draper H."/>
            <person name="Gonzalez-Garay M.L."/>
            <person name="Havlak P."/>
            <person name="Jackson L.R."/>
            <person name="Jacob L.S."/>
            <person name="Kelly S.H."/>
            <person name="Li L."/>
            <person name="Li Z."/>
            <person name="Liu J."/>
            <person name="Liu W."/>
            <person name="Lu J."/>
            <person name="Maheshwari M."/>
            <person name="Nguyen B.-V."/>
            <person name="Okwuonu G.O."/>
            <person name="Pasternak S."/>
            <person name="Perez L.M."/>
            <person name="Plopper F.J.H."/>
            <person name="Santibanez J."/>
            <person name="Shen H."/>
            <person name="Tabor P.E."/>
            <person name="Verduzco D."/>
            <person name="Waldron L."/>
            <person name="Wang Q."/>
            <person name="Williams G.A."/>
            <person name="Zhang J."/>
            <person name="Zhou J."/>
            <person name="Allen C.C."/>
            <person name="Amin A.G."/>
            <person name="Anyalebechi V."/>
            <person name="Bailey M."/>
            <person name="Barbaria J.A."/>
            <person name="Bimage K.E."/>
            <person name="Bryant N.P."/>
            <person name="Burch P.E."/>
            <person name="Burkett C.E."/>
            <person name="Burrell K.L."/>
            <person name="Calderon E."/>
            <person name="Cardenas V."/>
            <person name="Carter K."/>
            <person name="Casias K."/>
            <person name="Cavazos I."/>
            <person name="Cavazos S.R."/>
            <person name="Ceasar H."/>
            <person name="Chacko J."/>
            <person name="Chan S.N."/>
            <person name="Chavez D."/>
            <person name="Christopoulos C."/>
            <person name="Chu J."/>
            <person name="Cockrell R."/>
            <person name="Cox C.D."/>
            <person name="Dang M."/>
            <person name="Dathorne S.R."/>
            <person name="David R."/>
            <person name="Davis C.M."/>
            <person name="Davy-Carroll L."/>
            <person name="Deshazo D.R."/>
            <person name="Donlin J.E."/>
            <person name="D'Souza L."/>
            <person name="Eaves K.A."/>
            <person name="Egan A."/>
            <person name="Emery-Cohen A.J."/>
            <person name="Escotto M."/>
            <person name="Flagg N."/>
            <person name="Forbes L.D."/>
            <person name="Gabisi A.M."/>
            <person name="Garza M."/>
            <person name="Hamilton C."/>
            <person name="Henderson N."/>
            <person name="Hernandez O."/>
            <person name="Hines S."/>
            <person name="Hogues M.E."/>
            <person name="Huang M."/>
            <person name="Idlebird D.G."/>
            <person name="Johnson R."/>
            <person name="Jolivet A."/>
            <person name="Jones S."/>
            <person name="Kagan R."/>
            <person name="King L.M."/>
            <person name="Leal B."/>
            <person name="Lebow H."/>
            <person name="Lee S."/>
            <person name="LeVan J.M."/>
            <person name="Lewis L.C."/>
            <person name="London P."/>
            <person name="Lorensuhewa L.M."/>
            <person name="Loulseged H."/>
            <person name="Lovett D.A."/>
            <person name="Lucier A."/>
            <person name="Lucier R.L."/>
            <person name="Ma J."/>
            <person name="Madu R.C."/>
            <person name="Mapua P."/>
            <person name="Martindale A.D."/>
            <person name="Martinez E."/>
            <person name="Massey E."/>
            <person name="Mawhiney S."/>
            <person name="Meador M.G."/>
            <person name="Mendez S."/>
            <person name="Mercado C."/>
            <person name="Mercado I.C."/>
            <person name="Merritt C.E."/>
            <person name="Miner Z.L."/>
            <person name="Minja E."/>
            <person name="Mitchell T."/>
            <person name="Mohabbat F."/>
            <person name="Mohabbat K."/>
            <person name="Montgomery B."/>
            <person name="Moore N."/>
            <person name="Morris S."/>
            <person name="Munidasa M."/>
            <person name="Ngo R.N."/>
            <person name="Nguyen N.B."/>
            <person name="Nickerson E."/>
            <person name="Nwaokelemeh O.O."/>
            <person name="Nwokenkwo S."/>
            <person name="Obregon M."/>
            <person name="Oguh M."/>
            <person name="Oragunye N."/>
            <person name="Oviedo R.J."/>
            <person name="Parish B.J."/>
            <person name="Parker D.N."/>
            <person name="Parrish J."/>
            <person name="Parks K.L."/>
            <person name="Paul H.A."/>
            <person name="Payton B.A."/>
            <person name="Perez A."/>
            <person name="Perrin W."/>
            <person name="Pickens A."/>
            <person name="Primus E.L."/>
            <person name="Pu L.-L."/>
            <person name="Puazo M."/>
            <person name="Quiles M.M."/>
            <person name="Quiroz J.B."/>
            <person name="Rabata D."/>
            <person name="Reeves K."/>
            <person name="Ruiz S.J."/>
            <person name="Shao H."/>
            <person name="Sisson I."/>
            <person name="Sonaike T."/>
            <person name="Sorelle R.P."/>
            <person name="Sutton A.E."/>
            <person name="Svatek A.F."/>
            <person name="Svetz L.A."/>
            <person name="Tamerisa K.S."/>
            <person name="Taylor T.R."/>
            <person name="Teague B."/>
            <person name="Thomas N."/>
            <person name="Thorn R.D."/>
            <person name="Trejos Z.Y."/>
            <person name="Trevino B.K."/>
            <person name="Ukegbu O.N."/>
            <person name="Urban J.B."/>
            <person name="Vasquez L.I."/>
            <person name="Vera V.A."/>
            <person name="Villasana D.M."/>
            <person name="Wang L."/>
            <person name="Ward-Moore S."/>
            <person name="Warren J.T."/>
            <person name="Wei X."/>
            <person name="White F."/>
            <person name="Williamson A.L."/>
            <person name="Wleczyk R."/>
            <person name="Wooden H.S."/>
            <person name="Wooden S.H."/>
            <person name="Yen J."/>
            <person name="Yoon L."/>
            <person name="Yoon V."/>
            <person name="Zorrilla S.E."/>
            <person name="Nelson D."/>
            <person name="Kucherlapati R."/>
            <person name="Weinstock G."/>
            <person name="Gibbs R.A."/>
        </authorList>
    </citation>
    <scope>NUCLEOTIDE SEQUENCE [LARGE SCALE GENOMIC DNA]</scope>
</reference>
<reference key="3">
    <citation type="journal article" date="2004" name="Genome Res.">
        <title>The status, quality, and expansion of the NIH full-length cDNA project: the Mammalian Gene Collection (MGC).</title>
        <authorList>
            <consortium name="The MGC Project Team"/>
        </authorList>
    </citation>
    <scope>NUCLEOTIDE SEQUENCE [LARGE SCALE MRNA]</scope>
</reference>
<reference key="4">
    <citation type="journal article" date="2006" name="Cell">
        <title>SIRT4 inhibits glutamate dehydrogenase and opposes the effects of calorie restriction in pancreatic beta cells.</title>
        <authorList>
            <person name="Haigis M.C."/>
            <person name="Mostoslavsky R."/>
            <person name="Haigis K.M."/>
            <person name="Fahie K."/>
            <person name="Christodoulou D.C."/>
            <person name="Murphy A.J."/>
            <person name="Valenzuela D.M."/>
            <person name="Yancopoulos G.D."/>
            <person name="Karow M."/>
            <person name="Blander G."/>
            <person name="Wolberger C."/>
            <person name="Prolla T.A."/>
            <person name="Weindruch R."/>
            <person name="Alt F.W."/>
            <person name="Guarente L."/>
        </authorList>
    </citation>
    <scope>PROTEIN SEQUENCE OF N-TERMINUS</scope>
    <scope>FUNCTION</scope>
    <scope>INTERACTION WITH GLUD1</scope>
    <scope>SUBCELLULAR LOCATION</scope>
</reference>
<reference key="5">
    <citation type="journal article" date="2007" name="J. Biol. Chem.">
        <title>Regulation of insulin secretion by SIRT4, a mitochondrial ADP-ribosyltransferase.</title>
        <authorList>
            <person name="Ahuja N."/>
            <person name="Schwer B."/>
            <person name="Carobbio S."/>
            <person name="Waltregny D."/>
            <person name="North B.J."/>
            <person name="Castronovo V."/>
            <person name="Maechler P."/>
            <person name="Verdin E."/>
        </authorList>
    </citation>
    <scope>PROTEIN SEQUENCE OF N-TERMINUS</scope>
    <scope>FUNCTION</scope>
    <scope>CATALYTIC ACTIVITY</scope>
    <scope>SUBCELLULAR LOCATION</scope>
    <scope>INTERACTION WITH IDE AND SLC25A5</scope>
</reference>
<reference key="6">
    <citation type="journal article" date="2005" name="Mol. Biol. Cell">
        <title>Evolutionarily conserved and nonconserved cellular localizations and functions of human SIRT proteins.</title>
        <authorList>
            <person name="Michishita E."/>
            <person name="Park J.Y."/>
            <person name="Burneskis J.M."/>
            <person name="Barrett J.C."/>
            <person name="Horikawa I."/>
        </authorList>
    </citation>
    <scope>SUBCELLULAR LOCATION</scope>
</reference>
<reference key="7">
    <citation type="journal article" date="2013" name="Cancer Cell">
        <title>SIRT4 has tumor-suppressive activity and regulates the cellular metabolic response to DNA damage by inhibiting mitochondrial glutamine metabolism.</title>
        <authorList>
            <person name="Jeong S.M."/>
            <person name="Xiao C."/>
            <person name="Finley L.W."/>
            <person name="Lahusen T."/>
            <person name="Souza A.L."/>
            <person name="Pierce K."/>
            <person name="Li Y.H."/>
            <person name="Wang X."/>
            <person name="Laurent G."/>
            <person name="German N.J."/>
            <person name="Xu X."/>
            <person name="Li C."/>
            <person name="Wang R.H."/>
            <person name="Lee J."/>
            <person name="Csibi A."/>
            <person name="Cerione R."/>
            <person name="Blenis J."/>
            <person name="Clish C.B."/>
            <person name="Kimmelman A."/>
            <person name="Deng C.X."/>
            <person name="Haigis M.C."/>
        </authorList>
    </citation>
    <scope>FUNCTION AS A TUMOR SUPPRESSOR</scope>
</reference>
<reference key="8">
    <citation type="journal article" date="2013" name="Cell">
        <title>The mTORC1 pathway stimulates glutamine metabolism and cell proliferation by repressing SIRT4.</title>
        <authorList>
            <person name="Csibi A."/>
            <person name="Fendt S.M."/>
            <person name="Li C."/>
            <person name="Poulogiannis G."/>
            <person name="Choo A.Y."/>
            <person name="Chapski D.J."/>
            <person name="Jeong S.M."/>
            <person name="Dempsey J.M."/>
            <person name="Parkhitko A."/>
            <person name="Morrison T."/>
            <person name="Henske E.P."/>
            <person name="Haigis M.C."/>
            <person name="Cantley L.C."/>
            <person name="Stephanopoulos G."/>
            <person name="Yu J."/>
            <person name="Blenis J."/>
        </authorList>
    </citation>
    <scope>FUNCTION AS A TUMOR SUPPRESSOR</scope>
</reference>
<reference key="9">
    <citation type="journal article" date="2013" name="Mitochondrion">
        <title>Mitochondrial SIRT4-type proteins in Caenorhabditis elegans and mammals interact with pyruvate carboxylase and other acetylated biotin-dependent carboxylases.</title>
        <authorList>
            <person name="Wirth M."/>
            <person name="Karaca S."/>
            <person name="Wenzel D."/>
            <person name="Ho L."/>
            <person name="Tishkoff D."/>
            <person name="Lombard D.B."/>
            <person name="Verdin E."/>
            <person name="Urlaub H."/>
            <person name="Jedrusik-Bode M."/>
            <person name="Fischle W."/>
        </authorList>
    </citation>
    <scope>FUNCTION</scope>
    <scope>INTERACTION WITH PCCA; MCCC1 AND PC</scope>
</reference>
<reference key="10">
    <citation type="journal article" date="2013" name="Mol. Cell. Biol.">
        <title>SIRT4 represses peroxisome proliferator-activated receptor alpha activity to suppress hepatic fat oxidation.</title>
        <authorList>
            <person name="Laurent G."/>
            <person name="de Boer V.C."/>
            <person name="Finley L.W."/>
            <person name="Sweeney M."/>
            <person name="Lu H."/>
            <person name="Schug T.T."/>
            <person name="Cen Y."/>
            <person name="Jeong S.M."/>
            <person name="Li X."/>
            <person name="Sauve A.A."/>
            <person name="Haigis M.C."/>
        </authorList>
    </citation>
    <scope>FUNCTION</scope>
</reference>
<reference key="11">
    <citation type="journal article" date="2013" name="J. Biol. Chem.">
        <title>Activation of the protein deacetylase SIRT6 by long-chain fatty acids and widespread deacylation by mammalian sirtuins.</title>
        <authorList>
            <person name="Feldman J.L."/>
            <person name="Baeza J."/>
            <person name="Denu J.M."/>
        </authorList>
    </citation>
    <scope>FUNCTION</scope>
    <scope>CATALYTIC ACTIVITY</scope>
</reference>
<reference key="12">
    <citation type="journal article" date="2014" name="Cell">
        <title>Sirtuin 4 is a lipoamidase regulating pyruvate dehydrogenase complex activity.</title>
        <authorList>
            <person name="Mathias R.A."/>
            <person name="Greco T.M."/>
            <person name="Oberstein A."/>
            <person name="Budayeva H.G."/>
            <person name="Chakrabarti R."/>
            <person name="Rowland E.A."/>
            <person name="Kang Y."/>
            <person name="Shenk T."/>
            <person name="Cristea I.M."/>
        </authorList>
    </citation>
    <scope>FUNCTION</scope>
    <scope>CATALYTIC ACTIVITY</scope>
    <scope>BIOPHYSICOCHEMICAL PROPERTIES</scope>
    <scope>INTERACTION WITH DLAT AND PDHX</scope>
    <scope>MUTAGENESIS OF HIS-161</scope>
    <scope>INDUCTION BY GLUTAMINE</scope>
</reference>
<accession>Q9Y6E7</accession>
<accession>O43346</accession>
<accession>Q32M33</accession>